<sequence length="645" mass="70903">MIFPTKFDVIVVGGGHAGTEAALASARMGQSTLLLTHNIETLGQMSCNPSIGGIGKGHLVREVDAMGGAMAIATDEAGIQFRILNSSKGPAVRATRAQADRILYKQAIRSRLENQPNLWLFQQGVDDLLVEGDRVVGAVTQAGIQFRARAVVLTAGTFLDGKIHIGMNNYSAGRAGDPPAISLSARLKELKLPQGRLKTGTPPRIDGRSIDFSVMTEQPGDLDPIPVFSVMGSVAMHPQQMPCWITHTNEKTHELIRGGLDRSPMYTGMIEGVGPRYCPSIEDKIHRFAGKESHQIFLEPEGLTTNEYYPNGISTSLPFDVQLALVQSMRGLEHAHILRPGYAIEYDYFDPRGLKATLETKVIQGLFFAGQINGTTGYEEAAAQGMLAGINAALQIQERDAWTPRRDEAYLGVLVDDLITQGVLEPYRMFTSRAEYRLSLREDNADMRLTDVGRQLGCVGDVQWALFETKREAVARELERLRSTWVSPRILAEAEAERVLGKGIEREYALADLLRRPNVTYETLMSLKGMDGQDLGGPGVAEPAVREQVEIQLKYAGYIDRQAREVERHDHYENLKLPAEFDYMAVKGLSIEVRQKLTKQRPETLGQASRISGVTPAAISLMLVHLKKGGFKEFAALPPNTEAAA</sequence>
<dbReference type="EMBL" id="CU207211">
    <property type="protein sequence ID" value="CAL63519.2"/>
    <property type="molecule type" value="Genomic_DNA"/>
</dbReference>
<dbReference type="SMR" id="A4GAI2"/>
<dbReference type="STRING" id="204773.HEAR3418"/>
<dbReference type="KEGG" id="har:HEAR3418"/>
<dbReference type="eggNOG" id="COG0445">
    <property type="taxonomic scope" value="Bacteria"/>
</dbReference>
<dbReference type="HOGENOM" id="CLU_007831_2_2_4"/>
<dbReference type="OrthoDB" id="9815560at2"/>
<dbReference type="Proteomes" id="UP000006697">
    <property type="component" value="Chromosome"/>
</dbReference>
<dbReference type="GO" id="GO:0005829">
    <property type="term" value="C:cytosol"/>
    <property type="evidence" value="ECO:0007669"/>
    <property type="project" value="TreeGrafter"/>
</dbReference>
<dbReference type="GO" id="GO:0050660">
    <property type="term" value="F:flavin adenine dinucleotide binding"/>
    <property type="evidence" value="ECO:0007669"/>
    <property type="project" value="UniProtKB-UniRule"/>
</dbReference>
<dbReference type="GO" id="GO:0030488">
    <property type="term" value="P:tRNA methylation"/>
    <property type="evidence" value="ECO:0007669"/>
    <property type="project" value="TreeGrafter"/>
</dbReference>
<dbReference type="GO" id="GO:0002098">
    <property type="term" value="P:tRNA wobble uridine modification"/>
    <property type="evidence" value="ECO:0007669"/>
    <property type="project" value="InterPro"/>
</dbReference>
<dbReference type="FunFam" id="1.10.10.1800:FF:000001">
    <property type="entry name" value="tRNA uridine 5-carboxymethylaminomethyl modification enzyme MnmG"/>
    <property type="match status" value="1"/>
</dbReference>
<dbReference type="FunFam" id="1.10.150.570:FF:000001">
    <property type="entry name" value="tRNA uridine 5-carboxymethylaminomethyl modification enzyme MnmG"/>
    <property type="match status" value="1"/>
</dbReference>
<dbReference type="FunFam" id="3.50.50.60:FF:000002">
    <property type="entry name" value="tRNA uridine 5-carboxymethylaminomethyl modification enzyme MnmG"/>
    <property type="match status" value="1"/>
</dbReference>
<dbReference type="FunFam" id="3.50.50.60:FF:000010">
    <property type="entry name" value="tRNA uridine 5-carboxymethylaminomethyl modification enzyme MnmG"/>
    <property type="match status" value="1"/>
</dbReference>
<dbReference type="Gene3D" id="3.50.50.60">
    <property type="entry name" value="FAD/NAD(P)-binding domain"/>
    <property type="match status" value="2"/>
</dbReference>
<dbReference type="Gene3D" id="1.10.150.570">
    <property type="entry name" value="GidA associated domain, C-terminal subdomain"/>
    <property type="match status" value="1"/>
</dbReference>
<dbReference type="Gene3D" id="1.10.10.1800">
    <property type="entry name" value="tRNA uridine 5-carboxymethylaminomethyl modification enzyme MnmG/GidA"/>
    <property type="match status" value="1"/>
</dbReference>
<dbReference type="HAMAP" id="MF_00129">
    <property type="entry name" value="MnmG_GidA"/>
    <property type="match status" value="1"/>
</dbReference>
<dbReference type="InterPro" id="IPR036188">
    <property type="entry name" value="FAD/NAD-bd_sf"/>
</dbReference>
<dbReference type="InterPro" id="IPR049312">
    <property type="entry name" value="GIDA_C_N"/>
</dbReference>
<dbReference type="InterPro" id="IPR004416">
    <property type="entry name" value="MnmG"/>
</dbReference>
<dbReference type="InterPro" id="IPR002218">
    <property type="entry name" value="MnmG-rel"/>
</dbReference>
<dbReference type="InterPro" id="IPR020595">
    <property type="entry name" value="MnmG-rel_CS"/>
</dbReference>
<dbReference type="InterPro" id="IPR026904">
    <property type="entry name" value="MnmG_C"/>
</dbReference>
<dbReference type="InterPro" id="IPR047001">
    <property type="entry name" value="MnmG_C_subdom"/>
</dbReference>
<dbReference type="InterPro" id="IPR044920">
    <property type="entry name" value="MnmG_C_subdom_sf"/>
</dbReference>
<dbReference type="InterPro" id="IPR040131">
    <property type="entry name" value="MnmG_N"/>
</dbReference>
<dbReference type="NCBIfam" id="TIGR00136">
    <property type="entry name" value="mnmG_gidA"/>
    <property type="match status" value="1"/>
</dbReference>
<dbReference type="PANTHER" id="PTHR11806">
    <property type="entry name" value="GLUCOSE INHIBITED DIVISION PROTEIN A"/>
    <property type="match status" value="1"/>
</dbReference>
<dbReference type="PANTHER" id="PTHR11806:SF0">
    <property type="entry name" value="PROTEIN MTO1 HOMOLOG, MITOCHONDRIAL"/>
    <property type="match status" value="1"/>
</dbReference>
<dbReference type="Pfam" id="PF01134">
    <property type="entry name" value="GIDA"/>
    <property type="match status" value="1"/>
</dbReference>
<dbReference type="Pfam" id="PF21680">
    <property type="entry name" value="GIDA_C_1st"/>
    <property type="match status" value="1"/>
</dbReference>
<dbReference type="Pfam" id="PF13932">
    <property type="entry name" value="SAM_GIDA_C"/>
    <property type="match status" value="1"/>
</dbReference>
<dbReference type="SMART" id="SM01228">
    <property type="entry name" value="GIDA_assoc_3"/>
    <property type="match status" value="1"/>
</dbReference>
<dbReference type="SUPFAM" id="SSF51905">
    <property type="entry name" value="FAD/NAD(P)-binding domain"/>
    <property type="match status" value="1"/>
</dbReference>
<dbReference type="PROSITE" id="PS01280">
    <property type="entry name" value="GIDA_1"/>
    <property type="match status" value="1"/>
</dbReference>
<dbReference type="PROSITE" id="PS01281">
    <property type="entry name" value="GIDA_2"/>
    <property type="match status" value="1"/>
</dbReference>
<gene>
    <name evidence="1" type="primary">mnmG</name>
    <name evidence="1" type="synonym">gidA</name>
    <name type="ordered locus">HEAR3418</name>
</gene>
<name>MNMG_HERAR</name>
<evidence type="ECO:0000255" key="1">
    <source>
        <dbReference type="HAMAP-Rule" id="MF_00129"/>
    </source>
</evidence>
<accession>A4GAI2</accession>
<reference key="1">
    <citation type="journal article" date="2007" name="PLoS Genet.">
        <title>A tale of two oxidation states: bacterial colonization of arsenic-rich environments.</title>
        <authorList>
            <person name="Muller D."/>
            <person name="Medigue C."/>
            <person name="Koechler S."/>
            <person name="Barbe V."/>
            <person name="Barakat M."/>
            <person name="Talla E."/>
            <person name="Bonnefoy V."/>
            <person name="Krin E."/>
            <person name="Arsene-Ploetze F."/>
            <person name="Carapito C."/>
            <person name="Chandler M."/>
            <person name="Cournoyer B."/>
            <person name="Cruveiller S."/>
            <person name="Dossat C."/>
            <person name="Duval S."/>
            <person name="Heymann M."/>
            <person name="Leize E."/>
            <person name="Lieutaud A."/>
            <person name="Lievremont D."/>
            <person name="Makita Y."/>
            <person name="Mangenot S."/>
            <person name="Nitschke W."/>
            <person name="Ortet P."/>
            <person name="Perdrial N."/>
            <person name="Schoepp B."/>
            <person name="Siguier P."/>
            <person name="Simeonova D.D."/>
            <person name="Rouy Z."/>
            <person name="Segurens B."/>
            <person name="Turlin E."/>
            <person name="Vallenet D."/>
            <person name="van Dorsselaer A."/>
            <person name="Weiss S."/>
            <person name="Weissenbach J."/>
            <person name="Lett M.-C."/>
            <person name="Danchin A."/>
            <person name="Bertin P.N."/>
        </authorList>
    </citation>
    <scope>NUCLEOTIDE SEQUENCE [LARGE SCALE GENOMIC DNA]</scope>
    <source>
        <strain>ULPAs1</strain>
    </source>
</reference>
<keyword id="KW-0963">Cytoplasm</keyword>
<keyword id="KW-0274">FAD</keyword>
<keyword id="KW-0285">Flavoprotein</keyword>
<keyword id="KW-0520">NAD</keyword>
<keyword id="KW-1185">Reference proteome</keyword>
<keyword id="KW-0819">tRNA processing</keyword>
<organism>
    <name type="scientific">Herminiimonas arsenicoxydans</name>
    <dbReference type="NCBI Taxonomy" id="204773"/>
    <lineage>
        <taxon>Bacteria</taxon>
        <taxon>Pseudomonadati</taxon>
        <taxon>Pseudomonadota</taxon>
        <taxon>Betaproteobacteria</taxon>
        <taxon>Burkholderiales</taxon>
        <taxon>Oxalobacteraceae</taxon>
        <taxon>Herminiimonas</taxon>
    </lineage>
</organism>
<proteinExistence type="inferred from homology"/>
<comment type="function">
    <text evidence="1">NAD-binding protein involved in the addition of a carboxymethylaminomethyl (cmnm) group at the wobble position (U34) of certain tRNAs, forming tRNA-cmnm(5)s(2)U34.</text>
</comment>
<comment type="cofactor">
    <cofactor evidence="1">
        <name>FAD</name>
        <dbReference type="ChEBI" id="CHEBI:57692"/>
    </cofactor>
</comment>
<comment type="subunit">
    <text evidence="1">Homodimer. Heterotetramer of two MnmE and two MnmG subunits.</text>
</comment>
<comment type="subcellular location">
    <subcellularLocation>
        <location evidence="1">Cytoplasm</location>
    </subcellularLocation>
</comment>
<comment type="similarity">
    <text evidence="1">Belongs to the MnmG family.</text>
</comment>
<protein>
    <recommendedName>
        <fullName evidence="1">tRNA uridine 5-carboxymethylaminomethyl modification enzyme MnmG</fullName>
    </recommendedName>
    <alternativeName>
        <fullName evidence="1">Glucose-inhibited division protein A</fullName>
    </alternativeName>
</protein>
<feature type="chain" id="PRO_0000345280" description="tRNA uridine 5-carboxymethylaminomethyl modification enzyme MnmG">
    <location>
        <begin position="1"/>
        <end position="645"/>
    </location>
</feature>
<feature type="binding site" evidence="1">
    <location>
        <begin position="13"/>
        <end position="18"/>
    </location>
    <ligand>
        <name>FAD</name>
        <dbReference type="ChEBI" id="CHEBI:57692"/>
    </ligand>
</feature>
<feature type="binding site" evidence="1">
    <location>
        <begin position="274"/>
        <end position="288"/>
    </location>
    <ligand>
        <name>NAD(+)</name>
        <dbReference type="ChEBI" id="CHEBI:57540"/>
    </ligand>
</feature>